<gene>
    <name evidence="1" type="primary">scpB</name>
    <name type="ordered locus">stu0261</name>
</gene>
<keyword id="KW-0131">Cell cycle</keyword>
<keyword id="KW-0132">Cell division</keyword>
<keyword id="KW-0159">Chromosome partition</keyword>
<keyword id="KW-0963">Cytoplasm</keyword>
<keyword id="KW-1185">Reference proteome</keyword>
<accession>Q5M621</accession>
<evidence type="ECO:0000255" key="1">
    <source>
        <dbReference type="HAMAP-Rule" id="MF_01804"/>
    </source>
</evidence>
<dbReference type="EMBL" id="CP000023">
    <property type="protein sequence ID" value="AAV59985.1"/>
    <property type="molecule type" value="Genomic_DNA"/>
</dbReference>
<dbReference type="RefSeq" id="WP_011225441.1">
    <property type="nucleotide sequence ID" value="NC_006448.1"/>
</dbReference>
<dbReference type="SMR" id="Q5M621"/>
<dbReference type="STRING" id="264199.stu0261"/>
<dbReference type="GeneID" id="66898191"/>
<dbReference type="KEGG" id="stl:stu0261"/>
<dbReference type="eggNOG" id="COG1386">
    <property type="taxonomic scope" value="Bacteria"/>
</dbReference>
<dbReference type="HOGENOM" id="CLU_045647_5_3_9"/>
<dbReference type="Proteomes" id="UP000001170">
    <property type="component" value="Chromosome"/>
</dbReference>
<dbReference type="GO" id="GO:0005737">
    <property type="term" value="C:cytoplasm"/>
    <property type="evidence" value="ECO:0007669"/>
    <property type="project" value="UniProtKB-SubCell"/>
</dbReference>
<dbReference type="GO" id="GO:0051301">
    <property type="term" value="P:cell division"/>
    <property type="evidence" value="ECO:0007669"/>
    <property type="project" value="UniProtKB-KW"/>
</dbReference>
<dbReference type="GO" id="GO:0051304">
    <property type="term" value="P:chromosome separation"/>
    <property type="evidence" value="ECO:0007669"/>
    <property type="project" value="InterPro"/>
</dbReference>
<dbReference type="GO" id="GO:0006260">
    <property type="term" value="P:DNA replication"/>
    <property type="evidence" value="ECO:0007669"/>
    <property type="project" value="UniProtKB-UniRule"/>
</dbReference>
<dbReference type="Gene3D" id="1.10.10.10">
    <property type="entry name" value="Winged helix-like DNA-binding domain superfamily/Winged helix DNA-binding domain"/>
    <property type="match status" value="2"/>
</dbReference>
<dbReference type="HAMAP" id="MF_01804">
    <property type="entry name" value="ScpB"/>
    <property type="match status" value="1"/>
</dbReference>
<dbReference type="InterPro" id="IPR005234">
    <property type="entry name" value="ScpB_csome_segregation"/>
</dbReference>
<dbReference type="InterPro" id="IPR036388">
    <property type="entry name" value="WH-like_DNA-bd_sf"/>
</dbReference>
<dbReference type="InterPro" id="IPR036390">
    <property type="entry name" value="WH_DNA-bd_sf"/>
</dbReference>
<dbReference type="NCBIfam" id="TIGR00281">
    <property type="entry name" value="SMC-Scp complex subunit ScpB"/>
    <property type="match status" value="1"/>
</dbReference>
<dbReference type="PANTHER" id="PTHR34298">
    <property type="entry name" value="SEGREGATION AND CONDENSATION PROTEIN B"/>
    <property type="match status" value="1"/>
</dbReference>
<dbReference type="PANTHER" id="PTHR34298:SF2">
    <property type="entry name" value="SEGREGATION AND CONDENSATION PROTEIN B"/>
    <property type="match status" value="1"/>
</dbReference>
<dbReference type="Pfam" id="PF04079">
    <property type="entry name" value="SMC_ScpB"/>
    <property type="match status" value="1"/>
</dbReference>
<dbReference type="PIRSF" id="PIRSF019345">
    <property type="entry name" value="ScpB"/>
    <property type="match status" value="1"/>
</dbReference>
<dbReference type="SUPFAM" id="SSF46785">
    <property type="entry name" value="Winged helix' DNA-binding domain"/>
    <property type="match status" value="2"/>
</dbReference>
<sequence length="193" mass="21333">MSSHLARLEALLFVAGEDGLSLRTMAQLLEIPVTGLTQSLEKLQAKYEADEDTALCLLESSNTYKIVTKPDFACLLRDYSKTPINQSLSRASLEVLSIVAYKQPITRAEVDDIRGVNSSGAIAKLQAFGLIREAGKKDAVGRPNLYATTDYFLDYIGINSLDELVAIDQLELEEQETSLFREDAPEDLEDLDN</sequence>
<feature type="chain" id="PRO_0000273314" description="Segregation and condensation protein B">
    <location>
        <begin position="1"/>
        <end position="193"/>
    </location>
</feature>
<reference key="1">
    <citation type="journal article" date="2004" name="Nat. Biotechnol.">
        <title>Complete sequence and comparative genome analysis of the dairy bacterium Streptococcus thermophilus.</title>
        <authorList>
            <person name="Bolotin A."/>
            <person name="Quinquis B."/>
            <person name="Renault P."/>
            <person name="Sorokin A."/>
            <person name="Ehrlich S.D."/>
            <person name="Kulakauskas S."/>
            <person name="Lapidus A."/>
            <person name="Goltsman E."/>
            <person name="Mazur M."/>
            <person name="Pusch G.D."/>
            <person name="Fonstein M."/>
            <person name="Overbeek R."/>
            <person name="Kyprides N."/>
            <person name="Purnelle B."/>
            <person name="Prozzi D."/>
            <person name="Ngui K."/>
            <person name="Masuy D."/>
            <person name="Hancy F."/>
            <person name="Burteau S."/>
            <person name="Boutry M."/>
            <person name="Delcour J."/>
            <person name="Goffeau A."/>
            <person name="Hols P."/>
        </authorList>
    </citation>
    <scope>NUCLEOTIDE SEQUENCE [LARGE SCALE GENOMIC DNA]</scope>
    <source>
        <strain>ATCC BAA-250 / LMG 18311</strain>
    </source>
</reference>
<protein>
    <recommendedName>
        <fullName evidence="1">Segregation and condensation protein B</fullName>
    </recommendedName>
</protein>
<organism>
    <name type="scientific">Streptococcus thermophilus (strain ATCC BAA-250 / LMG 18311)</name>
    <dbReference type="NCBI Taxonomy" id="264199"/>
    <lineage>
        <taxon>Bacteria</taxon>
        <taxon>Bacillati</taxon>
        <taxon>Bacillota</taxon>
        <taxon>Bacilli</taxon>
        <taxon>Lactobacillales</taxon>
        <taxon>Streptococcaceae</taxon>
        <taxon>Streptococcus</taxon>
    </lineage>
</organism>
<name>SCPB_STRT2</name>
<proteinExistence type="inferred from homology"/>
<comment type="function">
    <text evidence="1">Participates in chromosomal partition during cell division. May act via the formation of a condensin-like complex containing Smc and ScpA that pull DNA away from mid-cell into both cell halves.</text>
</comment>
<comment type="subunit">
    <text evidence="1">Homodimer. Homodimerization may be required to stabilize the binding of ScpA to the Smc head domains. Component of a cohesin-like complex composed of ScpA, ScpB and the Smc homodimer, in which ScpA and ScpB bind to the head domain of Smc. The presence of the three proteins is required for the association of the complex with DNA.</text>
</comment>
<comment type="subcellular location">
    <subcellularLocation>
        <location evidence="1">Cytoplasm</location>
    </subcellularLocation>
    <text evidence="1">Associated with two foci at the outer edges of the nucleoid region in young cells, and at four foci within both cell halves in older cells.</text>
</comment>
<comment type="similarity">
    <text evidence="1">Belongs to the ScpB family.</text>
</comment>